<name>VPS26_DROME</name>
<reference key="1">
    <citation type="journal article" date="2000" name="Science">
        <title>The genome sequence of Drosophila melanogaster.</title>
        <authorList>
            <person name="Adams M.D."/>
            <person name="Celniker S.E."/>
            <person name="Holt R.A."/>
            <person name="Evans C.A."/>
            <person name="Gocayne J.D."/>
            <person name="Amanatides P.G."/>
            <person name="Scherer S.E."/>
            <person name="Li P.W."/>
            <person name="Hoskins R.A."/>
            <person name="Galle R.F."/>
            <person name="George R.A."/>
            <person name="Lewis S.E."/>
            <person name="Richards S."/>
            <person name="Ashburner M."/>
            <person name="Henderson S.N."/>
            <person name="Sutton G.G."/>
            <person name="Wortman J.R."/>
            <person name="Yandell M.D."/>
            <person name="Zhang Q."/>
            <person name="Chen L.X."/>
            <person name="Brandon R.C."/>
            <person name="Rogers Y.-H.C."/>
            <person name="Blazej R.G."/>
            <person name="Champe M."/>
            <person name="Pfeiffer B.D."/>
            <person name="Wan K.H."/>
            <person name="Doyle C."/>
            <person name="Baxter E.G."/>
            <person name="Helt G."/>
            <person name="Nelson C.R."/>
            <person name="Miklos G.L.G."/>
            <person name="Abril J.F."/>
            <person name="Agbayani A."/>
            <person name="An H.-J."/>
            <person name="Andrews-Pfannkoch C."/>
            <person name="Baldwin D."/>
            <person name="Ballew R.M."/>
            <person name="Basu A."/>
            <person name="Baxendale J."/>
            <person name="Bayraktaroglu L."/>
            <person name="Beasley E.M."/>
            <person name="Beeson K.Y."/>
            <person name="Benos P.V."/>
            <person name="Berman B.P."/>
            <person name="Bhandari D."/>
            <person name="Bolshakov S."/>
            <person name="Borkova D."/>
            <person name="Botchan M.R."/>
            <person name="Bouck J."/>
            <person name="Brokstein P."/>
            <person name="Brottier P."/>
            <person name="Burtis K.C."/>
            <person name="Busam D.A."/>
            <person name="Butler H."/>
            <person name="Cadieu E."/>
            <person name="Center A."/>
            <person name="Chandra I."/>
            <person name="Cherry J.M."/>
            <person name="Cawley S."/>
            <person name="Dahlke C."/>
            <person name="Davenport L.B."/>
            <person name="Davies P."/>
            <person name="de Pablos B."/>
            <person name="Delcher A."/>
            <person name="Deng Z."/>
            <person name="Mays A.D."/>
            <person name="Dew I."/>
            <person name="Dietz S.M."/>
            <person name="Dodson K."/>
            <person name="Doup L.E."/>
            <person name="Downes M."/>
            <person name="Dugan-Rocha S."/>
            <person name="Dunkov B.C."/>
            <person name="Dunn P."/>
            <person name="Durbin K.J."/>
            <person name="Evangelista C.C."/>
            <person name="Ferraz C."/>
            <person name="Ferriera S."/>
            <person name="Fleischmann W."/>
            <person name="Fosler C."/>
            <person name="Gabrielian A.E."/>
            <person name="Garg N.S."/>
            <person name="Gelbart W.M."/>
            <person name="Glasser K."/>
            <person name="Glodek A."/>
            <person name="Gong F."/>
            <person name="Gorrell J.H."/>
            <person name="Gu Z."/>
            <person name="Guan P."/>
            <person name="Harris M."/>
            <person name="Harris N.L."/>
            <person name="Harvey D.A."/>
            <person name="Heiman T.J."/>
            <person name="Hernandez J.R."/>
            <person name="Houck J."/>
            <person name="Hostin D."/>
            <person name="Houston K.A."/>
            <person name="Howland T.J."/>
            <person name="Wei M.-H."/>
            <person name="Ibegwam C."/>
            <person name="Jalali M."/>
            <person name="Kalush F."/>
            <person name="Karpen G.H."/>
            <person name="Ke Z."/>
            <person name="Kennison J.A."/>
            <person name="Ketchum K.A."/>
            <person name="Kimmel B.E."/>
            <person name="Kodira C.D."/>
            <person name="Kraft C.L."/>
            <person name="Kravitz S."/>
            <person name="Kulp D."/>
            <person name="Lai Z."/>
            <person name="Lasko P."/>
            <person name="Lei Y."/>
            <person name="Levitsky A.A."/>
            <person name="Li J.H."/>
            <person name="Li Z."/>
            <person name="Liang Y."/>
            <person name="Lin X."/>
            <person name="Liu X."/>
            <person name="Mattei B."/>
            <person name="McIntosh T.C."/>
            <person name="McLeod M.P."/>
            <person name="McPherson D."/>
            <person name="Merkulov G."/>
            <person name="Milshina N.V."/>
            <person name="Mobarry C."/>
            <person name="Morris J."/>
            <person name="Moshrefi A."/>
            <person name="Mount S.M."/>
            <person name="Moy M."/>
            <person name="Murphy B."/>
            <person name="Murphy L."/>
            <person name="Muzny D.M."/>
            <person name="Nelson D.L."/>
            <person name="Nelson D.R."/>
            <person name="Nelson K.A."/>
            <person name="Nixon K."/>
            <person name="Nusskern D.R."/>
            <person name="Pacleb J.M."/>
            <person name="Palazzolo M."/>
            <person name="Pittman G.S."/>
            <person name="Pan S."/>
            <person name="Pollard J."/>
            <person name="Puri V."/>
            <person name="Reese M.G."/>
            <person name="Reinert K."/>
            <person name="Remington K."/>
            <person name="Saunders R.D.C."/>
            <person name="Scheeler F."/>
            <person name="Shen H."/>
            <person name="Shue B.C."/>
            <person name="Siden-Kiamos I."/>
            <person name="Simpson M."/>
            <person name="Skupski M.P."/>
            <person name="Smith T.J."/>
            <person name="Spier E."/>
            <person name="Spradling A.C."/>
            <person name="Stapleton M."/>
            <person name="Strong R."/>
            <person name="Sun E."/>
            <person name="Svirskas R."/>
            <person name="Tector C."/>
            <person name="Turner R."/>
            <person name="Venter E."/>
            <person name="Wang A.H."/>
            <person name="Wang X."/>
            <person name="Wang Z.-Y."/>
            <person name="Wassarman D.A."/>
            <person name="Weinstock G.M."/>
            <person name="Weissenbach J."/>
            <person name="Williams S.M."/>
            <person name="Woodage T."/>
            <person name="Worley K.C."/>
            <person name="Wu D."/>
            <person name="Yang S."/>
            <person name="Yao Q.A."/>
            <person name="Ye J."/>
            <person name="Yeh R.-F."/>
            <person name="Zaveri J.S."/>
            <person name="Zhan M."/>
            <person name="Zhang G."/>
            <person name="Zhao Q."/>
            <person name="Zheng L."/>
            <person name="Zheng X.H."/>
            <person name="Zhong F.N."/>
            <person name="Zhong W."/>
            <person name="Zhou X."/>
            <person name="Zhu S.C."/>
            <person name="Zhu X."/>
            <person name="Smith H.O."/>
            <person name="Gibbs R.A."/>
            <person name="Myers E.W."/>
            <person name="Rubin G.M."/>
            <person name="Venter J.C."/>
        </authorList>
    </citation>
    <scope>NUCLEOTIDE SEQUENCE [LARGE SCALE GENOMIC DNA]</scope>
    <source>
        <strain>Berkeley</strain>
    </source>
</reference>
<reference key="2">
    <citation type="journal article" date="2002" name="Genome Biol.">
        <title>Annotation of the Drosophila melanogaster euchromatic genome: a systematic review.</title>
        <authorList>
            <person name="Misra S."/>
            <person name="Crosby M.A."/>
            <person name="Mungall C.J."/>
            <person name="Matthews B.B."/>
            <person name="Campbell K.S."/>
            <person name="Hradecky P."/>
            <person name="Huang Y."/>
            <person name="Kaminker J.S."/>
            <person name="Millburn G.H."/>
            <person name="Prochnik S.E."/>
            <person name="Smith C.D."/>
            <person name="Tupy J.L."/>
            <person name="Whitfield E.J."/>
            <person name="Bayraktaroglu L."/>
            <person name="Berman B.P."/>
            <person name="Bettencourt B.R."/>
            <person name="Celniker S.E."/>
            <person name="de Grey A.D.N.J."/>
            <person name="Drysdale R.A."/>
            <person name="Harris N.L."/>
            <person name="Richter J."/>
            <person name="Russo S."/>
            <person name="Schroeder A.J."/>
            <person name="Shu S.Q."/>
            <person name="Stapleton M."/>
            <person name="Yamada C."/>
            <person name="Ashburner M."/>
            <person name="Gelbart W.M."/>
            <person name="Rubin G.M."/>
            <person name="Lewis S.E."/>
        </authorList>
    </citation>
    <scope>GENOME REANNOTATION</scope>
    <source>
        <strain>Berkeley</strain>
    </source>
</reference>
<reference key="3">
    <citation type="journal article" date="2000" name="Science">
        <title>From sequence to chromosome: the tip of the X chromosome of D. melanogaster.</title>
        <authorList>
            <person name="Benos P.V."/>
            <person name="Gatt M.K."/>
            <person name="Ashburner M."/>
            <person name="Murphy L."/>
            <person name="Harris D."/>
            <person name="Barrell B.G."/>
            <person name="Ferraz C."/>
            <person name="Vidal S."/>
            <person name="Brun C."/>
            <person name="Demailles J."/>
            <person name="Cadieu E."/>
            <person name="Dreano S."/>
            <person name="Gloux S."/>
            <person name="Lelaure V."/>
            <person name="Mottier S."/>
            <person name="Galibert F."/>
            <person name="Borkova D."/>
            <person name="Minana B."/>
            <person name="Kafatos F.C."/>
            <person name="Louis C."/>
            <person name="Siden-Kiamos I."/>
            <person name="Bolshakov S."/>
            <person name="Papagiannakis G."/>
            <person name="Spanos L."/>
            <person name="Cox S."/>
            <person name="Madueno E."/>
            <person name="de Pablos B."/>
            <person name="Modolell J."/>
            <person name="Peter A."/>
            <person name="Schoettler P."/>
            <person name="Werner M."/>
            <person name="Mourkioti F."/>
            <person name="Beinert N."/>
            <person name="Dowe G."/>
            <person name="Schaefer U."/>
            <person name="Jaeckle H."/>
            <person name="Bucheton A."/>
            <person name="Callister D.M."/>
            <person name="Campbell L.A."/>
            <person name="Darlamitsou A."/>
            <person name="Henderson N.S."/>
            <person name="McMillan P.J."/>
            <person name="Salles C."/>
            <person name="Tait E.A."/>
            <person name="Valenti P."/>
            <person name="Saunders R.D.C."/>
            <person name="Glover D.M."/>
        </authorList>
    </citation>
    <scope>NUCLEOTIDE SEQUENCE [LARGE SCALE GENOMIC DNA]</scope>
    <source>
        <strain>Oregon-R</strain>
    </source>
</reference>
<reference key="4">
    <citation type="submission" date="2005-06" db="EMBL/GenBank/DDBJ databases">
        <authorList>
            <person name="Stapleton M."/>
            <person name="Carlson J.W."/>
            <person name="Chavez C."/>
            <person name="Frise E."/>
            <person name="George R.A."/>
            <person name="Pacleb J.M."/>
            <person name="Park S."/>
            <person name="Wan K.H."/>
            <person name="Yu C."/>
            <person name="Celniker S.E."/>
        </authorList>
    </citation>
    <scope>NUCLEOTIDE SEQUENCE [LARGE SCALE MRNA]</scope>
    <source>
        <strain>Berkeley</strain>
        <tissue>Embryo</tissue>
    </source>
</reference>
<reference key="5">
    <citation type="journal article" date="2002" name="Genome Biol.">
        <title>A Drosophila full-length cDNA resource.</title>
        <authorList>
            <person name="Stapleton M."/>
            <person name="Carlson J.W."/>
            <person name="Brokstein P."/>
            <person name="Yu C."/>
            <person name="Champe M."/>
            <person name="George R.A."/>
            <person name="Guarin H."/>
            <person name="Kronmiller B."/>
            <person name="Pacleb J.M."/>
            <person name="Park S."/>
            <person name="Wan K.H."/>
            <person name="Rubin G.M."/>
            <person name="Celniker S.E."/>
        </authorList>
    </citation>
    <scope>NUCLEOTIDE SEQUENCE [LARGE SCALE MRNA] OF 292-478</scope>
    <source>
        <strain>Berkeley</strain>
        <tissue>Ovary</tissue>
    </source>
</reference>
<reference key="6">
    <citation type="journal article" date="2008" name="Nat. Cell Biol.">
        <title>Wingless secretion promotes and requires retromer-dependent cycling of Wntless.</title>
        <authorList>
            <person name="Port F."/>
            <person name="Kuster M."/>
            <person name="Herr P."/>
            <person name="Furger E."/>
            <person name="Banziger C."/>
            <person name="Hausmann G."/>
            <person name="Basler K."/>
        </authorList>
    </citation>
    <scope>FUNCTION</scope>
    <scope>PROBABLE COMPONENT OF THE RETROMER COMPLEX</scope>
    <scope>SUBCELLULAR LOCATION</scope>
    <scope>DISRUPTION PHENOTYPE</scope>
</reference>
<gene>
    <name type="primary">Vps26</name>
    <name type="ORF">CG14804</name>
</gene>
<keyword id="KW-0963">Cytoplasm</keyword>
<keyword id="KW-0472">Membrane</keyword>
<keyword id="KW-0653">Protein transport</keyword>
<keyword id="KW-1185">Reference proteome</keyword>
<keyword id="KW-0813">Transport</keyword>
<keyword id="KW-0879">Wnt signaling pathway</keyword>
<feature type="chain" id="PRO_0000073011" description="Vacuolar protein sorting-associated protein 26">
    <location>
        <begin position="1"/>
        <end position="478"/>
    </location>
</feature>
<feature type="region of interest" description="Disordered" evidence="1">
    <location>
        <begin position="298"/>
        <end position="478"/>
    </location>
</feature>
<feature type="compositionally biased region" description="Low complexity" evidence="1">
    <location>
        <begin position="303"/>
        <end position="323"/>
    </location>
</feature>
<feature type="compositionally biased region" description="Low complexity" evidence="1">
    <location>
        <begin position="347"/>
        <end position="356"/>
    </location>
</feature>
<feature type="compositionally biased region" description="Polar residues" evidence="1">
    <location>
        <begin position="367"/>
        <end position="379"/>
    </location>
</feature>
<feature type="compositionally biased region" description="Low complexity" evidence="1">
    <location>
        <begin position="386"/>
        <end position="406"/>
    </location>
</feature>
<feature type="compositionally biased region" description="Low complexity" evidence="1">
    <location>
        <begin position="416"/>
        <end position="431"/>
    </location>
</feature>
<feature type="sequence conflict" description="In Ref. 3; CAA15940." evidence="3" ref="3">
    <original>R</original>
    <variation>G</variation>
    <location>
        <position position="94"/>
    </location>
</feature>
<comment type="function">
    <text evidence="2">Component of the retromer complex which acts in conjunction with wingless (wg) and clathrin-mediated endocytosis to sustain a wntless (wls) traffic loop. This loop encompasses the Golgi, the cell surface, an endocytic compartment and a retrograde route leading back to the Golgi, thereby enabling wls to direct wg secretion. The hh and dpp signaling pathways do not require the retromer complex suggesting that it does not play a general role in exocytosis.</text>
</comment>
<comment type="subunit">
    <text evidence="3">Component of the retromer complex, composed of Vps26 and Vps35.</text>
</comment>
<comment type="subcellular location">
    <subcellularLocation>
        <location evidence="2">Cytoplasm</location>
    </subcellularLocation>
    <subcellularLocation>
        <location evidence="2">Membrane</location>
        <topology evidence="2">Peripheral membrane protein</topology>
    </subcellularLocation>
</comment>
<comment type="disruption phenotype">
    <text evidence="2">Accumulation of wg in the Golgi, preventing wg from being secreted from the cells.</text>
</comment>
<comment type="similarity">
    <text evidence="3">Belongs to the VPS26 family.</text>
</comment>
<comment type="sequence caution" evidence="3">
    <conflict type="erroneous initiation">
        <sequence resource="EMBL-CDS" id="AAL28390"/>
    </conflict>
</comment>
<accession>Q9W552</accession>
<accession>O46088</accession>
<accession>Q4QQB4</accession>
<accession>Q95SD6</accession>
<protein>
    <recommendedName>
        <fullName>Vacuolar protein sorting-associated protein 26</fullName>
    </recommendedName>
    <alternativeName>
        <fullName>VPS26 protein homolog</fullName>
    </alternativeName>
</protein>
<proteinExistence type="evidence at transcript level"/>
<sequence length="478" mass="52656">MNFLGFGQSADIEIVFDGAEHKTAEVKGEDGKVEKMLLFYDGETVSGKVNVTLKKPGSKLEHQGIKIEFIGQIELYYDRGNHHEFKCLAKALARPGDLIQNNSYPFDFPKVEKQFEVYAGSNVRLRYFLRATIVRRISDITKEVDIAVHTLCSYPEMNNPIKMEVGIEDCLHIEFEYNKSKYHLRDTIIGKIYFLLVRIKIKHMEIAIIKKESTGTGPTMFNENETIAKYEIMDGAPVKGESIPIRVFLAGYNLTPTMRDINKKFSVKYFLNLVLMDTEDRRYFKQQEITLWRKADKPRYHGAQQHQQQQHQHVPLHAPPHLVSGPAAPTVAHSLISSSTDSGEVGGAPTAPGTAGSESKMGLFTRESPNQEFSQQQMDSPPLTPTPSTASVAVAVPTAASSVSEPAPERGIGDGAAAATTSASPVAMLSSSPPPLLPVSPLSRSETEASEQVQPEDEDLDAITPNTKKTGATPLATD</sequence>
<evidence type="ECO:0000256" key="1">
    <source>
        <dbReference type="SAM" id="MobiDB-lite"/>
    </source>
</evidence>
<evidence type="ECO:0000269" key="2">
    <source>
    </source>
</evidence>
<evidence type="ECO:0000305" key="3"/>
<organism>
    <name type="scientific">Drosophila melanogaster</name>
    <name type="common">Fruit fly</name>
    <dbReference type="NCBI Taxonomy" id="7227"/>
    <lineage>
        <taxon>Eukaryota</taxon>
        <taxon>Metazoa</taxon>
        <taxon>Ecdysozoa</taxon>
        <taxon>Arthropoda</taxon>
        <taxon>Hexapoda</taxon>
        <taxon>Insecta</taxon>
        <taxon>Pterygota</taxon>
        <taxon>Neoptera</taxon>
        <taxon>Endopterygota</taxon>
        <taxon>Diptera</taxon>
        <taxon>Brachycera</taxon>
        <taxon>Muscomorpha</taxon>
        <taxon>Ephydroidea</taxon>
        <taxon>Drosophilidae</taxon>
        <taxon>Drosophila</taxon>
        <taxon>Sophophora</taxon>
    </lineage>
</organism>
<dbReference type="EMBL" id="AE014298">
    <property type="protein sequence ID" value="AAF45679.1"/>
    <property type="molecule type" value="Genomic_DNA"/>
</dbReference>
<dbReference type="EMBL" id="AL021106">
    <property type="protein sequence ID" value="CAA15940.1"/>
    <property type="molecule type" value="Genomic_DNA"/>
</dbReference>
<dbReference type="EMBL" id="BT023502">
    <property type="protein sequence ID" value="AAY84902.1"/>
    <property type="molecule type" value="mRNA"/>
</dbReference>
<dbReference type="EMBL" id="AY060842">
    <property type="protein sequence ID" value="AAL28390.1"/>
    <property type="status" value="ALT_INIT"/>
    <property type="molecule type" value="mRNA"/>
</dbReference>
<dbReference type="PIR" id="T12683">
    <property type="entry name" value="T12683"/>
</dbReference>
<dbReference type="RefSeq" id="NP_569952.2">
    <property type="nucleotide sequence ID" value="NM_130596.3"/>
</dbReference>
<dbReference type="SMR" id="Q9W552"/>
<dbReference type="BioGRID" id="57690">
    <property type="interactions" value="10"/>
</dbReference>
<dbReference type="ComplexPortal" id="CPX-2610">
    <property type="entry name" value="Retromer complex"/>
</dbReference>
<dbReference type="FunCoup" id="Q9W552">
    <property type="interactions" value="2165"/>
</dbReference>
<dbReference type="IntAct" id="Q9W552">
    <property type="interactions" value="2"/>
</dbReference>
<dbReference type="STRING" id="7227.FBpp0070298"/>
<dbReference type="GlyGen" id="Q9W552">
    <property type="glycosylation" value="2 sites"/>
</dbReference>
<dbReference type="PaxDb" id="7227-FBpp0070298"/>
<dbReference type="DNASU" id="31144"/>
<dbReference type="EnsemblMetazoa" id="FBtr0070311">
    <property type="protein sequence ID" value="FBpp0070298"/>
    <property type="gene ID" value="FBgn0014411"/>
</dbReference>
<dbReference type="GeneID" id="31144"/>
<dbReference type="KEGG" id="dme:Dmel_CG14804"/>
<dbReference type="UCSC" id="CG14804-RA">
    <property type="organism name" value="d. melanogaster"/>
</dbReference>
<dbReference type="AGR" id="FB:FBgn0014411"/>
<dbReference type="CTD" id="31144"/>
<dbReference type="FlyBase" id="FBgn0014411">
    <property type="gene designation" value="Vps26"/>
</dbReference>
<dbReference type="VEuPathDB" id="VectorBase:FBgn0014411"/>
<dbReference type="eggNOG" id="KOG3063">
    <property type="taxonomic scope" value="Eukaryota"/>
</dbReference>
<dbReference type="GeneTree" id="ENSGT00950000183064"/>
<dbReference type="HOGENOM" id="CLU_029884_1_0_1"/>
<dbReference type="InParanoid" id="Q9W552"/>
<dbReference type="OMA" id="HQHVPLH"/>
<dbReference type="OrthoDB" id="3821113at2759"/>
<dbReference type="PhylomeDB" id="Q9W552"/>
<dbReference type="Reactome" id="R-DME-3238698">
    <property type="pathway name" value="WNT ligand biogenesis and trafficking"/>
</dbReference>
<dbReference type="BioGRID-ORCS" id="31144">
    <property type="hits" value="0 hits in 3 CRISPR screens"/>
</dbReference>
<dbReference type="ChiTaRS" id="Vps26">
    <property type="organism name" value="fly"/>
</dbReference>
<dbReference type="GenomeRNAi" id="31144"/>
<dbReference type="PRO" id="PR:Q9W552"/>
<dbReference type="Proteomes" id="UP000000803">
    <property type="component" value="Chromosome X"/>
</dbReference>
<dbReference type="Bgee" id="FBgn0014411">
    <property type="expression patterns" value="Expressed in embryonic/larval hemocyte (Drosophila) and 172 other cell types or tissues"/>
</dbReference>
<dbReference type="GO" id="GO:0005829">
    <property type="term" value="C:cytosol"/>
    <property type="evidence" value="ECO:0007669"/>
    <property type="project" value="GOC"/>
</dbReference>
<dbReference type="GO" id="GO:0005768">
    <property type="term" value="C:endosome"/>
    <property type="evidence" value="ECO:0000250"/>
    <property type="project" value="FlyBase"/>
</dbReference>
<dbReference type="GO" id="GO:0030904">
    <property type="term" value="C:retromer complex"/>
    <property type="evidence" value="ECO:0000314"/>
    <property type="project" value="UniProtKB"/>
</dbReference>
<dbReference type="GO" id="GO:0030906">
    <property type="term" value="C:retromer, cargo-selective complex"/>
    <property type="evidence" value="ECO:0000250"/>
    <property type="project" value="FlyBase"/>
</dbReference>
<dbReference type="GO" id="GO:0038024">
    <property type="term" value="F:cargo receptor activity"/>
    <property type="evidence" value="ECO:0000353"/>
    <property type="project" value="FlyBase"/>
</dbReference>
<dbReference type="GO" id="GO:0099638">
    <property type="term" value="P:endosome to plasma membrane protein transport"/>
    <property type="evidence" value="ECO:0000315"/>
    <property type="project" value="FlyBase"/>
</dbReference>
<dbReference type="GO" id="GO:0006886">
    <property type="term" value="P:intracellular protein transport"/>
    <property type="evidence" value="ECO:0000315"/>
    <property type="project" value="UniProtKB"/>
</dbReference>
<dbReference type="GO" id="GO:0030111">
    <property type="term" value="P:regulation of Wnt signaling pathway"/>
    <property type="evidence" value="ECO:0000315"/>
    <property type="project" value="UniProtKB"/>
</dbReference>
<dbReference type="GO" id="GO:0042147">
    <property type="term" value="P:retrograde transport, endosome to Golgi"/>
    <property type="evidence" value="ECO:0000250"/>
    <property type="project" value="FlyBase"/>
</dbReference>
<dbReference type="GO" id="GO:0016055">
    <property type="term" value="P:Wnt signaling pathway"/>
    <property type="evidence" value="ECO:0007669"/>
    <property type="project" value="UniProtKB-KW"/>
</dbReference>
<dbReference type="FunFam" id="2.60.40.640:FF:000001">
    <property type="entry name" value="Vacuolar protein sorting-associated protein 26A"/>
    <property type="match status" value="1"/>
</dbReference>
<dbReference type="FunFam" id="2.60.40.640:FF:000002">
    <property type="entry name" value="Vacuolar protein sorting-associated protein 26A"/>
    <property type="match status" value="1"/>
</dbReference>
<dbReference type="Gene3D" id="2.60.40.640">
    <property type="match status" value="2"/>
</dbReference>
<dbReference type="InterPro" id="IPR014752">
    <property type="entry name" value="Arrestin-like_C"/>
</dbReference>
<dbReference type="InterPro" id="IPR028934">
    <property type="entry name" value="Vps26-related"/>
</dbReference>
<dbReference type="PANTHER" id="PTHR12233">
    <property type="entry name" value="VACUOLAR PROTEIN SORTING 26 RELATED"/>
    <property type="match status" value="1"/>
</dbReference>
<dbReference type="Pfam" id="PF03643">
    <property type="entry name" value="Vps26"/>
    <property type="match status" value="1"/>
</dbReference>